<sequence length="117" mass="12912">MQRCAGFLFLSLILCAALSETFGLVLSAKEKRGWTLNSAGYLLGPHAVDNHRSFNDKHGFTGKREIQPEEDIKAGNIGRPLADENIVRTVVEFLTYLHLKEAGALDNLPSPEETNES</sequence>
<gene>
    <name type="primary">GAL</name>
</gene>
<proteinExistence type="inferred from homology"/>
<keyword id="KW-0025">Alternative splicing</keyword>
<keyword id="KW-0027">Amidation</keyword>
<keyword id="KW-0165">Cleavage on pair of basic residues</keyword>
<keyword id="KW-0372">Hormone</keyword>
<keyword id="KW-0527">Neuropeptide</keyword>
<keyword id="KW-1185">Reference proteome</keyword>
<keyword id="KW-0964">Secreted</keyword>
<keyword id="KW-0732">Signal</keyword>
<evidence type="ECO:0000250" key="1"/>
<evidence type="ECO:0000250" key="2">
    <source>
        <dbReference type="UniProtKB" id="P07480"/>
    </source>
</evidence>
<evidence type="ECO:0000250" key="3">
    <source>
        <dbReference type="UniProtKB" id="P22466"/>
    </source>
</evidence>
<evidence type="ECO:0000255" key="4"/>
<evidence type="ECO:0000303" key="5">
    <source>
    </source>
</evidence>
<evidence type="ECO:0000305" key="6"/>
<accession>Q9W6M9</accession>
<accession>Q9W6M8</accession>
<protein>
    <recommendedName>
        <fullName>Galanin peptides</fullName>
    </recommendedName>
    <component>
        <recommendedName>
            <fullName>Galanin</fullName>
        </recommendedName>
    </component>
    <component>
        <recommendedName>
            <fullName>Galanin message-associated peptide</fullName>
            <shortName>GMAP</shortName>
        </recommendedName>
    </component>
</protein>
<dbReference type="EMBL" id="AF141936">
    <property type="protein sequence ID" value="AAD37349.1"/>
    <property type="molecule type" value="mRNA"/>
</dbReference>
<dbReference type="EMBL" id="AF141935">
    <property type="protein sequence ID" value="AAD37348.1"/>
    <property type="molecule type" value="mRNA"/>
</dbReference>
<dbReference type="RefSeq" id="XP_015719285.1">
    <property type="nucleotide sequence ID" value="XM_015863799.1"/>
</dbReference>
<dbReference type="RefSeq" id="XP_015719286.1">
    <property type="nucleotide sequence ID" value="XM_015863800.1"/>
</dbReference>
<dbReference type="RefSeq" id="XP_015719287.1">
    <property type="nucleotide sequence ID" value="XM_015863801.1"/>
</dbReference>
<dbReference type="RefSeq" id="XP_015719288.1">
    <property type="nucleotide sequence ID" value="XM_015863802.1"/>
</dbReference>
<dbReference type="RefSeq" id="XP_015719289.1">
    <molecule id="Q9W6M9-1"/>
    <property type="nucleotide sequence ID" value="XM_015863803.2"/>
</dbReference>
<dbReference type="RefSeq" id="XP_032301076.1">
    <molecule id="Q9W6M9-2"/>
    <property type="nucleotide sequence ID" value="XM_032445185.1"/>
</dbReference>
<dbReference type="SMR" id="Q9W6M9"/>
<dbReference type="Ensembl" id="ENSCJPT00005031846.1">
    <molecule id="Q9W6M9-2"/>
    <property type="protein sequence ID" value="ENSCJPP00005023207.1"/>
    <property type="gene ID" value="ENSCJPG00005018444.1"/>
</dbReference>
<dbReference type="Ensembl" id="ENSCJPT00005031847.1">
    <molecule id="Q9W6M9-1"/>
    <property type="protein sequence ID" value="ENSCJPP00005023208.1"/>
    <property type="gene ID" value="ENSCJPG00005018444.1"/>
</dbReference>
<dbReference type="GeneID" id="107314517"/>
<dbReference type="KEGG" id="cjo:107314517"/>
<dbReference type="CTD" id="51083"/>
<dbReference type="GeneTree" id="ENSGT00390000009663"/>
<dbReference type="OrthoDB" id="8721537at2759"/>
<dbReference type="Proteomes" id="UP000694412">
    <property type="component" value="Chromosome 5"/>
</dbReference>
<dbReference type="GO" id="GO:0005615">
    <property type="term" value="C:extracellular space"/>
    <property type="evidence" value="ECO:0007669"/>
    <property type="project" value="Ensembl"/>
</dbReference>
<dbReference type="GO" id="GO:0043025">
    <property type="term" value="C:neuronal cell body"/>
    <property type="evidence" value="ECO:0007669"/>
    <property type="project" value="Ensembl"/>
</dbReference>
<dbReference type="GO" id="GO:0030141">
    <property type="term" value="C:secretory granule"/>
    <property type="evidence" value="ECO:0007669"/>
    <property type="project" value="TreeGrafter"/>
</dbReference>
<dbReference type="GO" id="GO:0004966">
    <property type="term" value="F:galanin receptor activity"/>
    <property type="evidence" value="ECO:0000250"/>
    <property type="project" value="UniProtKB"/>
</dbReference>
<dbReference type="GO" id="GO:0005184">
    <property type="term" value="F:neuropeptide hormone activity"/>
    <property type="evidence" value="ECO:0000250"/>
    <property type="project" value="UniProtKB"/>
</dbReference>
<dbReference type="GO" id="GO:0031764">
    <property type="term" value="F:type 1 galanin receptor binding"/>
    <property type="evidence" value="ECO:0000250"/>
    <property type="project" value="UniProtKB"/>
</dbReference>
<dbReference type="GO" id="GO:0031765">
    <property type="term" value="F:type 2 galanin receptor binding"/>
    <property type="evidence" value="ECO:0000250"/>
    <property type="project" value="UniProtKB"/>
</dbReference>
<dbReference type="GO" id="GO:0031766">
    <property type="term" value="F:type 3 galanin receptor binding"/>
    <property type="evidence" value="ECO:0000250"/>
    <property type="project" value="UniProtKB"/>
</dbReference>
<dbReference type="GO" id="GO:0007399">
    <property type="term" value="P:nervous system development"/>
    <property type="evidence" value="ECO:0007669"/>
    <property type="project" value="Ensembl"/>
</dbReference>
<dbReference type="GO" id="GO:0060746">
    <property type="term" value="P:parental behavior"/>
    <property type="evidence" value="ECO:0007669"/>
    <property type="project" value="Ensembl"/>
</dbReference>
<dbReference type="GO" id="GO:0051464">
    <property type="term" value="P:positive regulation of cortisol secretion"/>
    <property type="evidence" value="ECO:0007669"/>
    <property type="project" value="Ensembl"/>
</dbReference>
<dbReference type="GO" id="GO:0051795">
    <property type="term" value="P:positive regulation of timing of catagen"/>
    <property type="evidence" value="ECO:0007669"/>
    <property type="project" value="Ensembl"/>
</dbReference>
<dbReference type="GO" id="GO:0045944">
    <property type="term" value="P:positive regulation of transcription by RNA polymerase II"/>
    <property type="evidence" value="ECO:0000250"/>
    <property type="project" value="UniProtKB"/>
</dbReference>
<dbReference type="GO" id="GO:0010737">
    <property type="term" value="P:protein kinase A signaling"/>
    <property type="evidence" value="ECO:0007669"/>
    <property type="project" value="Ensembl"/>
</dbReference>
<dbReference type="InterPro" id="IPR008174">
    <property type="entry name" value="Galanin"/>
</dbReference>
<dbReference type="InterPro" id="IPR008175">
    <property type="entry name" value="Galanin_pre"/>
</dbReference>
<dbReference type="InterPro" id="IPR013068">
    <property type="entry name" value="GMAP"/>
</dbReference>
<dbReference type="PANTHER" id="PTHR16839">
    <property type="entry name" value="GALANIN"/>
    <property type="match status" value="1"/>
</dbReference>
<dbReference type="PANTHER" id="PTHR16839:SF1">
    <property type="entry name" value="GALANIN PEPTIDES"/>
    <property type="match status" value="1"/>
</dbReference>
<dbReference type="Pfam" id="PF01296">
    <property type="entry name" value="Galanin"/>
    <property type="match status" value="1"/>
</dbReference>
<dbReference type="Pfam" id="PF06540">
    <property type="entry name" value="GMAP"/>
    <property type="match status" value="1"/>
</dbReference>
<dbReference type="PRINTS" id="PR00273">
    <property type="entry name" value="GALANIN"/>
</dbReference>
<dbReference type="SMART" id="SM00071">
    <property type="entry name" value="Galanin"/>
    <property type="match status" value="1"/>
</dbReference>
<dbReference type="PROSITE" id="PS00861">
    <property type="entry name" value="GALANIN"/>
    <property type="match status" value="1"/>
</dbReference>
<organism>
    <name type="scientific">Coturnix japonica</name>
    <name type="common">Japanese quail</name>
    <name type="synonym">Coturnix coturnix japonica</name>
    <dbReference type="NCBI Taxonomy" id="93934"/>
    <lineage>
        <taxon>Eukaryota</taxon>
        <taxon>Metazoa</taxon>
        <taxon>Chordata</taxon>
        <taxon>Craniata</taxon>
        <taxon>Vertebrata</taxon>
        <taxon>Euteleostomi</taxon>
        <taxon>Archelosauria</taxon>
        <taxon>Archosauria</taxon>
        <taxon>Dinosauria</taxon>
        <taxon>Saurischia</taxon>
        <taxon>Theropoda</taxon>
        <taxon>Coelurosauria</taxon>
        <taxon>Aves</taxon>
        <taxon>Neognathae</taxon>
        <taxon>Galloanserae</taxon>
        <taxon>Galliformes</taxon>
        <taxon>Phasianidae</taxon>
        <taxon>Perdicinae</taxon>
        <taxon>Coturnix</taxon>
    </lineage>
</organism>
<reference key="1">
    <citation type="journal article" date="2000" name="Endocrinology">
        <title>Existence of galanin in lumbosacral sympathetic ganglionic neurons that project to the quail uterine oviduct.</title>
        <authorList>
            <person name="Sakamoto H."/>
            <person name="Ubuka T."/>
            <person name="Kohchi C."/>
            <person name="Li D."/>
            <person name="Ukena K."/>
            <person name="Tsutsui K."/>
        </authorList>
    </citation>
    <scope>NUCLEOTIDE SEQUENCE [MRNA] (ISOFORMS 1 AND 2)</scope>
    <source>
        <tissue>Brain</tissue>
    </source>
</reference>
<name>GALA_COTJA</name>
<comment type="function">
    <text evidence="2 3">Endocrine hormone of the central and peripheral nervous systems that binds and activates the G protein-coupled receptors GALR1, GALR2, and GALR3. This small neuropeptide may regulate diverse physiologic functions including contraction of smooth muscle of the gastrointestinal and genitourinary tract, growth hormone and insulin release and adrenal secretion.</text>
</comment>
<comment type="subcellular location">
    <subcellularLocation>
        <location evidence="2 3">Secreted</location>
    </subcellularLocation>
</comment>
<comment type="alternative products">
    <event type="alternative splicing"/>
    <isoform>
        <id>Q9W6M9-1</id>
        <name>1</name>
        <sequence type="displayed"/>
    </isoform>
    <isoform>
        <id>Q9W6M9-2</id>
        <name>2</name>
        <sequence type="described" ref="VSP_001597"/>
    </isoform>
</comment>
<comment type="similarity">
    <text evidence="6">Belongs to the galanin family.</text>
</comment>
<feature type="signal peptide" evidence="4">
    <location>
        <begin position="1"/>
        <end position="19"/>
    </location>
</feature>
<feature type="propeptide" id="PRO_0000010460" evidence="1">
    <location>
        <begin position="20"/>
        <end position="30"/>
    </location>
</feature>
<feature type="peptide" id="PRO_0000010461" description="Galanin">
    <location>
        <begin position="33"/>
        <end position="61"/>
    </location>
</feature>
<feature type="peptide" id="PRO_0000010462" description="Galanin message-associated peptide">
    <location>
        <begin position="65"/>
        <end position="117"/>
    </location>
</feature>
<feature type="modified residue" description="Threonine amide" evidence="1">
    <location>
        <position position="61"/>
    </location>
</feature>
<feature type="splice variant" id="VSP_001597" description="In isoform 2." evidence="5">
    <original>H</original>
    <variation>RRIDHLLMIKEMPIARGEEAPGAY</variation>
    <location>
        <position position="46"/>
    </location>
</feature>